<comment type="function">
    <text evidence="1">Displays ATPase and GTPase activities.</text>
</comment>
<comment type="similarity">
    <text evidence="1">Belongs to the RapZ-like family.</text>
</comment>
<feature type="chain" id="PRO_1000056829" description="Nucleotide-binding protein LSEI_0959">
    <location>
        <begin position="1"/>
        <end position="295"/>
    </location>
</feature>
<feature type="binding site" evidence="1">
    <location>
        <begin position="12"/>
        <end position="19"/>
    </location>
    <ligand>
        <name>ATP</name>
        <dbReference type="ChEBI" id="CHEBI:30616"/>
    </ligand>
</feature>
<feature type="binding site" evidence="1">
    <location>
        <begin position="62"/>
        <end position="65"/>
    </location>
    <ligand>
        <name>GTP</name>
        <dbReference type="ChEBI" id="CHEBI:37565"/>
    </ligand>
</feature>
<protein>
    <recommendedName>
        <fullName evidence="1">Nucleotide-binding protein LSEI_0959</fullName>
    </recommendedName>
</protein>
<keyword id="KW-0067">ATP-binding</keyword>
<keyword id="KW-0342">GTP-binding</keyword>
<keyword id="KW-0547">Nucleotide-binding</keyword>
<keyword id="KW-1185">Reference proteome</keyword>
<reference key="1">
    <citation type="journal article" date="2006" name="Proc. Natl. Acad. Sci. U.S.A.">
        <title>Comparative genomics of the lactic acid bacteria.</title>
        <authorList>
            <person name="Makarova K.S."/>
            <person name="Slesarev A."/>
            <person name="Wolf Y.I."/>
            <person name="Sorokin A."/>
            <person name="Mirkin B."/>
            <person name="Koonin E.V."/>
            <person name="Pavlov A."/>
            <person name="Pavlova N."/>
            <person name="Karamychev V."/>
            <person name="Polouchine N."/>
            <person name="Shakhova V."/>
            <person name="Grigoriev I."/>
            <person name="Lou Y."/>
            <person name="Rohksar D."/>
            <person name="Lucas S."/>
            <person name="Huang K."/>
            <person name="Goodstein D.M."/>
            <person name="Hawkins T."/>
            <person name="Plengvidhya V."/>
            <person name="Welker D."/>
            <person name="Hughes J."/>
            <person name="Goh Y."/>
            <person name="Benson A."/>
            <person name="Baldwin K."/>
            <person name="Lee J.-H."/>
            <person name="Diaz-Muniz I."/>
            <person name="Dosti B."/>
            <person name="Smeianov V."/>
            <person name="Wechter W."/>
            <person name="Barabote R."/>
            <person name="Lorca G."/>
            <person name="Altermann E."/>
            <person name="Barrangou R."/>
            <person name="Ganesan B."/>
            <person name="Xie Y."/>
            <person name="Rawsthorne H."/>
            <person name="Tamir D."/>
            <person name="Parker C."/>
            <person name="Breidt F."/>
            <person name="Broadbent J.R."/>
            <person name="Hutkins R."/>
            <person name="O'Sullivan D."/>
            <person name="Steele J."/>
            <person name="Unlu G."/>
            <person name="Saier M.H. Jr."/>
            <person name="Klaenhammer T."/>
            <person name="Richardson P."/>
            <person name="Kozyavkin S."/>
            <person name="Weimer B.C."/>
            <person name="Mills D.A."/>
        </authorList>
    </citation>
    <scope>NUCLEOTIDE SEQUENCE [LARGE SCALE GENOMIC DNA]</scope>
    <source>
        <strain>ATCC 334 / BCRC 17002 / CCUG 31169 / CIP 107868 / KCTC 3260 / NRRL B-441</strain>
    </source>
</reference>
<organism>
    <name type="scientific">Lacticaseibacillus paracasei (strain ATCC 334 / BCRC 17002 / CCUG 31169 / CIP 107868 / KCTC 3260 / NRRL B-441)</name>
    <name type="common">Lactobacillus paracasei</name>
    <dbReference type="NCBI Taxonomy" id="321967"/>
    <lineage>
        <taxon>Bacteria</taxon>
        <taxon>Bacillati</taxon>
        <taxon>Bacillota</taxon>
        <taxon>Bacilli</taxon>
        <taxon>Lactobacillales</taxon>
        <taxon>Lactobacillaceae</taxon>
        <taxon>Lacticaseibacillus</taxon>
    </lineage>
</organism>
<proteinExistence type="inferred from homology"/>
<gene>
    <name type="ordered locus">LSEI_0959</name>
</gene>
<accession>Q03AL4</accession>
<dbReference type="EMBL" id="CP000423">
    <property type="protein sequence ID" value="ABJ69758.1"/>
    <property type="molecule type" value="Genomic_DNA"/>
</dbReference>
<dbReference type="RefSeq" id="YP_806200.1">
    <property type="nucleotide sequence ID" value="NC_008526.1"/>
</dbReference>
<dbReference type="SMR" id="Q03AL4"/>
<dbReference type="STRING" id="321967.LSEI_0959"/>
<dbReference type="PaxDb" id="321967-LSEI_0959"/>
<dbReference type="KEGG" id="lca:LSEI_0959"/>
<dbReference type="PATRIC" id="fig|321967.11.peg.929"/>
<dbReference type="HOGENOM" id="CLU_059558_0_0_9"/>
<dbReference type="Proteomes" id="UP000001651">
    <property type="component" value="Chromosome"/>
</dbReference>
<dbReference type="GO" id="GO:0005524">
    <property type="term" value="F:ATP binding"/>
    <property type="evidence" value="ECO:0007669"/>
    <property type="project" value="UniProtKB-UniRule"/>
</dbReference>
<dbReference type="GO" id="GO:0005525">
    <property type="term" value="F:GTP binding"/>
    <property type="evidence" value="ECO:0007669"/>
    <property type="project" value="UniProtKB-UniRule"/>
</dbReference>
<dbReference type="Gene3D" id="3.40.50.300">
    <property type="entry name" value="P-loop containing nucleotide triphosphate hydrolases"/>
    <property type="match status" value="1"/>
</dbReference>
<dbReference type="HAMAP" id="MF_00636">
    <property type="entry name" value="RapZ_like"/>
    <property type="match status" value="1"/>
</dbReference>
<dbReference type="InterPro" id="IPR027417">
    <property type="entry name" value="P-loop_NTPase"/>
</dbReference>
<dbReference type="InterPro" id="IPR005337">
    <property type="entry name" value="RapZ-like"/>
</dbReference>
<dbReference type="InterPro" id="IPR053930">
    <property type="entry name" value="RapZ-like_N"/>
</dbReference>
<dbReference type="InterPro" id="IPR053931">
    <property type="entry name" value="RapZ_C"/>
</dbReference>
<dbReference type="NCBIfam" id="NF003828">
    <property type="entry name" value="PRK05416.1"/>
    <property type="match status" value="1"/>
</dbReference>
<dbReference type="PANTHER" id="PTHR30448">
    <property type="entry name" value="RNASE ADAPTER PROTEIN RAPZ"/>
    <property type="match status" value="1"/>
</dbReference>
<dbReference type="PANTHER" id="PTHR30448:SF0">
    <property type="entry name" value="RNASE ADAPTER PROTEIN RAPZ"/>
    <property type="match status" value="1"/>
</dbReference>
<dbReference type="Pfam" id="PF22740">
    <property type="entry name" value="PapZ_C"/>
    <property type="match status" value="1"/>
</dbReference>
<dbReference type="Pfam" id="PF03668">
    <property type="entry name" value="RapZ-like_N"/>
    <property type="match status" value="1"/>
</dbReference>
<dbReference type="PIRSF" id="PIRSF005052">
    <property type="entry name" value="P-loopkin"/>
    <property type="match status" value="1"/>
</dbReference>
<dbReference type="SUPFAM" id="SSF52540">
    <property type="entry name" value="P-loop containing nucleoside triphosphate hydrolases"/>
    <property type="match status" value="1"/>
</dbReference>
<sequence length="295" mass="33609">MTESLDLVIITGMSGAGKTVAMQAFEDLGYFCVDNMPPALLPKFWELVKESGKITKVALVVDLRSRAFYDQIIDMLANLDNNAYVHSRILFLDATDEELVSRYKETRRSHPLAMEGRLMDGIKKERALLTELRNRAQVVIDTTTLSPRQLREKIFLNFKESGSQPAFHIEVMSFGFKYGLPIDADIVMDVRFLPNPFYIKDYRPKTGLDPEVYNYVMDNEDAESFYNKFYDLLSEIMPKYKAEGKTSVTIAIGCTGGQHRSVAFAERIGKAFSDAYAVDITHRDIKKHKETVNRS</sequence>
<name>Y959_LACP3</name>
<evidence type="ECO:0000255" key="1">
    <source>
        <dbReference type="HAMAP-Rule" id="MF_00636"/>
    </source>
</evidence>